<reference key="1">
    <citation type="journal article" date="2010" name="Proteomics">
        <title>Molecular diversity of toxic components from the scorpion Heterometrus petersii venom revealed by proteomic and transcriptome analysis.</title>
        <authorList>
            <person name="Ma Y."/>
            <person name="Zhao Y."/>
            <person name="Zhao R."/>
            <person name="Zhang W."/>
            <person name="He Y."/>
            <person name="Wu Y."/>
            <person name="Cao Z."/>
            <person name="Guo L."/>
            <person name="Li W."/>
        </authorList>
    </citation>
    <scope>NUCLEOTIDE SEQUENCE [MRNA]</scope>
</reference>
<reference key="2">
    <citation type="journal article" date="2012" name="Biochem. Pharmacol.">
        <title>Purification, molecular cloning and functional characterization of HelaTx1 (Heterometrus laoticus): the first member of a new kappa-KTX subfamily.</title>
        <authorList>
            <person name="Vandendriessche T."/>
            <person name="Kopljar I."/>
            <person name="Jenkins D.P."/>
            <person name="Diego-Garcia E."/>
            <person name="Abdel-Mottaleb Y."/>
            <person name="Vermassen E."/>
            <person name="Clynen E."/>
            <person name="Schoofs L."/>
            <person name="Wulff H."/>
            <person name="Snyders D."/>
            <person name="Tytgat J."/>
        </authorList>
    </citation>
    <scope>NOMENCLATURE</scope>
</reference>
<comment type="function">
    <text evidence="2 4">Shows structural homology with WaTx suggesting that it acts as a cell-penetrating peptide (CPP) with defensive purpose that induces pain by specifically activating mammalian sensory neuron TRPA1 channels (By similarity). Has no effect on the voltage-gated potassium channels tested (By similarity).</text>
</comment>
<comment type="subcellular location">
    <subcellularLocation>
        <location evidence="9">Secreted</location>
    </subcellularLocation>
</comment>
<comment type="tissue specificity">
    <text evidence="9">Expressed by the venom gland.</text>
</comment>
<comment type="domain">
    <text evidence="3">Has the structural arrangement of two alpha-helices stabilized by disulfide bonds (CSalpha/alpha 2(S-S)).</text>
</comment>
<comment type="similarity">
    <text evidence="8">Belongs to the short scorpion toxin superfamily. Potassium channel inhibitor kappa-KTx family. Kappa-KTx 1 subfamily.</text>
</comment>
<name>KKX14_HETPE</name>
<proteinExistence type="inferred from homology"/>
<sequence>MKSCLINVSLLILLLLPILGYASVNAESIDGENDFEEERGFGCFRSCWKAGHDDKTCKSMCG</sequence>
<protein>
    <recommendedName>
        <fullName evidence="7">Potassium channel toxin kappa-KTx 1.4</fullName>
    </recommendedName>
    <alternativeName>
        <fullName evidence="6">HSP009C</fullName>
    </alternativeName>
</protein>
<keyword id="KW-1015">Disulfide bond</keyword>
<keyword id="KW-0872">Ion channel impairing toxin</keyword>
<keyword id="KW-0528">Neurotoxin</keyword>
<keyword id="KW-0964">Secreted</keyword>
<keyword id="KW-0732">Signal</keyword>
<keyword id="KW-0800">Toxin</keyword>
<accession>P0DJ33</accession>
<organism>
    <name type="scientific">Heterometrus petersii</name>
    <name type="common">Asian forest scorpion</name>
    <dbReference type="NCBI Taxonomy" id="754296"/>
    <lineage>
        <taxon>Eukaryota</taxon>
        <taxon>Metazoa</taxon>
        <taxon>Ecdysozoa</taxon>
        <taxon>Arthropoda</taxon>
        <taxon>Chelicerata</taxon>
        <taxon>Arachnida</taxon>
        <taxon>Scorpiones</taxon>
        <taxon>Iurida</taxon>
        <taxon>Scorpionoidea</taxon>
        <taxon>Scorpionidae</taxon>
        <taxon>Heterometrinae</taxon>
        <taxon>Heterometrus</taxon>
    </lineage>
</organism>
<feature type="signal peptide" evidence="5">
    <location>
        <begin position="1"/>
        <end position="26"/>
    </location>
</feature>
<feature type="propeptide" id="PRO_0000416796" evidence="1">
    <location>
        <begin position="27"/>
        <end position="38"/>
    </location>
</feature>
<feature type="peptide" id="PRO_0000416797" description="Potassium channel toxin kappa-KTx 1.4">
    <location>
        <begin position="40"/>
        <end position="62"/>
    </location>
</feature>
<feature type="site" description="Aromatic residue of the functional dyad" evidence="3">
    <location>
        <position position="44"/>
    </location>
</feature>
<feature type="site" description="Basic residue of the functional dyad" evidence="3">
    <location>
        <position position="58"/>
    </location>
</feature>
<feature type="disulfide bond" evidence="3">
    <location>
        <begin position="43"/>
        <end position="61"/>
    </location>
</feature>
<feature type="disulfide bond" evidence="3">
    <location>
        <begin position="47"/>
        <end position="57"/>
    </location>
</feature>
<dbReference type="TCDB" id="8.B.2.1.2">
    <property type="family name" value="the short scorpion toxin (s-st) family"/>
</dbReference>
<dbReference type="GO" id="GO:0005576">
    <property type="term" value="C:extracellular region"/>
    <property type="evidence" value="ECO:0007669"/>
    <property type="project" value="UniProtKB-SubCell"/>
</dbReference>
<dbReference type="GO" id="GO:0099106">
    <property type="term" value="F:ion channel regulator activity"/>
    <property type="evidence" value="ECO:0007669"/>
    <property type="project" value="UniProtKB-KW"/>
</dbReference>
<dbReference type="GO" id="GO:0090729">
    <property type="term" value="F:toxin activity"/>
    <property type="evidence" value="ECO:0007669"/>
    <property type="project" value="UniProtKB-KW"/>
</dbReference>
<dbReference type="InterPro" id="IPR012630">
    <property type="entry name" value="Toxin_25"/>
</dbReference>
<dbReference type="Pfam" id="PF08095">
    <property type="entry name" value="Toxin_25"/>
    <property type="match status" value="1"/>
</dbReference>
<evidence type="ECO:0000250" key="1"/>
<evidence type="ECO:0000250" key="2">
    <source>
        <dbReference type="UniProtKB" id="C0HLG4"/>
    </source>
</evidence>
<evidence type="ECO:0000250" key="3">
    <source>
        <dbReference type="UniProtKB" id="P82851"/>
    </source>
</evidence>
<evidence type="ECO:0000250" key="4">
    <source>
        <dbReference type="UniProtKB" id="P83655"/>
    </source>
</evidence>
<evidence type="ECO:0000255" key="5"/>
<evidence type="ECO:0000303" key="6">
    <source>
    </source>
</evidence>
<evidence type="ECO:0000303" key="7">
    <source>
    </source>
</evidence>
<evidence type="ECO:0000305" key="8"/>
<evidence type="ECO:0000305" key="9">
    <source>
    </source>
</evidence>